<accession>A1WNY5</accession>
<sequence length="512" mass="55138">MADKLIIFDTTLRDGEQSPGASMTKDEKLRIARQLERLKVDVIEAGFAASSNGDFDAVRAIASTIREATICSLARANDRDIARAAQALEGAANARIHIFIATSALHMEKKLRMTPGQVLEQSLQSVRFARNLVADIEFSPEDGYRSDPDFLCRVIEAAIAEGATTINVPDTVGYAIPELYGNFIKMLRERVPNSDKAIWSVHCHNDLGMAVANSLAGVKMGGARQVECTINGLGERAGNCSLEEVVMAVKTRRDYFGLDLGIATQHILAASRMVSQTTGFAVQLNKAIVGANAFAHASGIHQDGVLKARDTYEIMRAQDVGWSANKMVLGKLSGRSAFKQRLQELGVSLDSEAEINLAFARFKELADRKSEIFDEDILALVSDESVSGDNEQYGFVSLFQQSETGKQPHARIVFTVNGQNVHAEAQGNGPVDASLKAIEAHVHSGAEMVLYSVNAISGSTESQGEVTVRLQNSGRIVNGVGADPDIVVASAKAYFSALNKLQNKADRVAAQG</sequence>
<comment type="function">
    <text evidence="1">Catalyzes the condensation of the acetyl group of acetyl-CoA with 3-methyl-2-oxobutanoate (2-ketoisovalerate) to form 3-carboxy-3-hydroxy-4-methylpentanoate (2-isopropylmalate).</text>
</comment>
<comment type="catalytic activity">
    <reaction evidence="1">
        <text>3-methyl-2-oxobutanoate + acetyl-CoA + H2O = (2S)-2-isopropylmalate + CoA + H(+)</text>
        <dbReference type="Rhea" id="RHEA:21524"/>
        <dbReference type="ChEBI" id="CHEBI:1178"/>
        <dbReference type="ChEBI" id="CHEBI:11851"/>
        <dbReference type="ChEBI" id="CHEBI:15377"/>
        <dbReference type="ChEBI" id="CHEBI:15378"/>
        <dbReference type="ChEBI" id="CHEBI:57287"/>
        <dbReference type="ChEBI" id="CHEBI:57288"/>
        <dbReference type="EC" id="2.3.3.13"/>
    </reaction>
</comment>
<comment type="cofactor">
    <cofactor evidence="1">
        <name>Mn(2+)</name>
        <dbReference type="ChEBI" id="CHEBI:29035"/>
    </cofactor>
</comment>
<comment type="pathway">
    <text evidence="1">Amino-acid biosynthesis; L-leucine biosynthesis; L-leucine from 3-methyl-2-oxobutanoate: step 1/4.</text>
</comment>
<comment type="subunit">
    <text evidence="1">Homodimer.</text>
</comment>
<comment type="subcellular location">
    <subcellularLocation>
        <location evidence="1">Cytoplasm</location>
    </subcellularLocation>
</comment>
<comment type="similarity">
    <text evidence="1">Belongs to the alpha-IPM synthase/homocitrate synthase family. LeuA type 1 subfamily.</text>
</comment>
<keyword id="KW-0028">Amino-acid biosynthesis</keyword>
<keyword id="KW-0100">Branched-chain amino acid biosynthesis</keyword>
<keyword id="KW-0963">Cytoplasm</keyword>
<keyword id="KW-0432">Leucine biosynthesis</keyword>
<keyword id="KW-0464">Manganese</keyword>
<keyword id="KW-0479">Metal-binding</keyword>
<keyword id="KW-1185">Reference proteome</keyword>
<keyword id="KW-0808">Transferase</keyword>
<dbReference type="EC" id="2.3.3.13" evidence="1"/>
<dbReference type="EMBL" id="CP000542">
    <property type="protein sequence ID" value="ABM59342.1"/>
    <property type="molecule type" value="Genomic_DNA"/>
</dbReference>
<dbReference type="RefSeq" id="WP_011811333.1">
    <property type="nucleotide sequence ID" value="NC_008786.1"/>
</dbReference>
<dbReference type="SMR" id="A1WNY5"/>
<dbReference type="STRING" id="391735.Veis_3626"/>
<dbReference type="GeneID" id="76462025"/>
<dbReference type="KEGG" id="vei:Veis_3626"/>
<dbReference type="eggNOG" id="COG0119">
    <property type="taxonomic scope" value="Bacteria"/>
</dbReference>
<dbReference type="HOGENOM" id="CLU_022158_0_1_4"/>
<dbReference type="OrthoDB" id="9803573at2"/>
<dbReference type="UniPathway" id="UPA00048">
    <property type="reaction ID" value="UER00070"/>
</dbReference>
<dbReference type="Proteomes" id="UP000000374">
    <property type="component" value="Chromosome"/>
</dbReference>
<dbReference type="GO" id="GO:0005829">
    <property type="term" value="C:cytosol"/>
    <property type="evidence" value="ECO:0007669"/>
    <property type="project" value="TreeGrafter"/>
</dbReference>
<dbReference type="GO" id="GO:0003852">
    <property type="term" value="F:2-isopropylmalate synthase activity"/>
    <property type="evidence" value="ECO:0007669"/>
    <property type="project" value="UniProtKB-UniRule"/>
</dbReference>
<dbReference type="GO" id="GO:0003985">
    <property type="term" value="F:acetyl-CoA C-acetyltransferase activity"/>
    <property type="evidence" value="ECO:0007669"/>
    <property type="project" value="UniProtKB-UniRule"/>
</dbReference>
<dbReference type="GO" id="GO:0030145">
    <property type="term" value="F:manganese ion binding"/>
    <property type="evidence" value="ECO:0007669"/>
    <property type="project" value="UniProtKB-UniRule"/>
</dbReference>
<dbReference type="GO" id="GO:0009098">
    <property type="term" value="P:L-leucine biosynthetic process"/>
    <property type="evidence" value="ECO:0007669"/>
    <property type="project" value="UniProtKB-UniRule"/>
</dbReference>
<dbReference type="CDD" id="cd07940">
    <property type="entry name" value="DRE_TIM_IPMS"/>
    <property type="match status" value="1"/>
</dbReference>
<dbReference type="FunFam" id="1.10.238.260:FF:000001">
    <property type="entry name" value="2-isopropylmalate synthase"/>
    <property type="match status" value="1"/>
</dbReference>
<dbReference type="FunFam" id="3.20.20.70:FF:000010">
    <property type="entry name" value="2-isopropylmalate synthase"/>
    <property type="match status" value="1"/>
</dbReference>
<dbReference type="Gene3D" id="1.10.238.260">
    <property type="match status" value="1"/>
</dbReference>
<dbReference type="Gene3D" id="3.30.160.270">
    <property type="match status" value="1"/>
</dbReference>
<dbReference type="Gene3D" id="3.20.20.70">
    <property type="entry name" value="Aldolase class I"/>
    <property type="match status" value="1"/>
</dbReference>
<dbReference type="HAMAP" id="MF_01025">
    <property type="entry name" value="LeuA_type1"/>
    <property type="match status" value="1"/>
</dbReference>
<dbReference type="InterPro" id="IPR050073">
    <property type="entry name" value="2-IPM_HCS-like"/>
</dbReference>
<dbReference type="InterPro" id="IPR013709">
    <property type="entry name" value="2-isopropylmalate_synth_dimer"/>
</dbReference>
<dbReference type="InterPro" id="IPR002034">
    <property type="entry name" value="AIPM/Hcit_synth_CS"/>
</dbReference>
<dbReference type="InterPro" id="IPR013785">
    <property type="entry name" value="Aldolase_TIM"/>
</dbReference>
<dbReference type="InterPro" id="IPR054691">
    <property type="entry name" value="LeuA/HCS_post-cat"/>
</dbReference>
<dbReference type="InterPro" id="IPR036230">
    <property type="entry name" value="LeuA_allosteric_dom_sf"/>
</dbReference>
<dbReference type="InterPro" id="IPR005671">
    <property type="entry name" value="LeuA_bact_synth"/>
</dbReference>
<dbReference type="InterPro" id="IPR000891">
    <property type="entry name" value="PYR_CT"/>
</dbReference>
<dbReference type="NCBIfam" id="TIGR00973">
    <property type="entry name" value="leuA_bact"/>
    <property type="match status" value="1"/>
</dbReference>
<dbReference type="NCBIfam" id="NF002086">
    <property type="entry name" value="PRK00915.1-3"/>
    <property type="match status" value="1"/>
</dbReference>
<dbReference type="NCBIfam" id="NF002087">
    <property type="entry name" value="PRK00915.1-4"/>
    <property type="match status" value="1"/>
</dbReference>
<dbReference type="PANTHER" id="PTHR10277:SF9">
    <property type="entry name" value="2-ISOPROPYLMALATE SYNTHASE 1, CHLOROPLASTIC-RELATED"/>
    <property type="match status" value="1"/>
</dbReference>
<dbReference type="PANTHER" id="PTHR10277">
    <property type="entry name" value="HOMOCITRATE SYNTHASE-RELATED"/>
    <property type="match status" value="1"/>
</dbReference>
<dbReference type="Pfam" id="PF22617">
    <property type="entry name" value="HCS_D2"/>
    <property type="match status" value="1"/>
</dbReference>
<dbReference type="Pfam" id="PF00682">
    <property type="entry name" value="HMGL-like"/>
    <property type="match status" value="1"/>
</dbReference>
<dbReference type="Pfam" id="PF08502">
    <property type="entry name" value="LeuA_dimer"/>
    <property type="match status" value="1"/>
</dbReference>
<dbReference type="SMART" id="SM00917">
    <property type="entry name" value="LeuA_dimer"/>
    <property type="match status" value="1"/>
</dbReference>
<dbReference type="SUPFAM" id="SSF110921">
    <property type="entry name" value="2-isopropylmalate synthase LeuA, allosteric (dimerisation) domain"/>
    <property type="match status" value="1"/>
</dbReference>
<dbReference type="SUPFAM" id="SSF51569">
    <property type="entry name" value="Aldolase"/>
    <property type="match status" value="1"/>
</dbReference>
<dbReference type="PROSITE" id="PS00815">
    <property type="entry name" value="AIPM_HOMOCIT_SYNTH_1"/>
    <property type="match status" value="1"/>
</dbReference>
<dbReference type="PROSITE" id="PS00816">
    <property type="entry name" value="AIPM_HOMOCIT_SYNTH_2"/>
    <property type="match status" value="1"/>
</dbReference>
<dbReference type="PROSITE" id="PS50991">
    <property type="entry name" value="PYR_CT"/>
    <property type="match status" value="1"/>
</dbReference>
<name>LEU1_VEREI</name>
<proteinExistence type="inferred from homology"/>
<gene>
    <name evidence="1" type="primary">leuA</name>
    <name type="ordered locus">Veis_3626</name>
</gene>
<feature type="chain" id="PRO_1000149326" description="2-isopropylmalate synthase">
    <location>
        <begin position="1"/>
        <end position="512"/>
    </location>
</feature>
<feature type="domain" description="Pyruvate carboxyltransferase" evidence="1">
    <location>
        <begin position="5"/>
        <end position="268"/>
    </location>
</feature>
<feature type="region of interest" description="Regulatory domain" evidence="1">
    <location>
        <begin position="394"/>
        <end position="512"/>
    </location>
</feature>
<feature type="binding site" evidence="1">
    <location>
        <position position="14"/>
    </location>
    <ligand>
        <name>Mn(2+)</name>
        <dbReference type="ChEBI" id="CHEBI:29035"/>
    </ligand>
</feature>
<feature type="binding site" evidence="1">
    <location>
        <position position="202"/>
    </location>
    <ligand>
        <name>Mn(2+)</name>
        <dbReference type="ChEBI" id="CHEBI:29035"/>
    </ligand>
</feature>
<feature type="binding site" evidence="1">
    <location>
        <position position="204"/>
    </location>
    <ligand>
        <name>Mn(2+)</name>
        <dbReference type="ChEBI" id="CHEBI:29035"/>
    </ligand>
</feature>
<feature type="binding site" evidence="1">
    <location>
        <position position="239"/>
    </location>
    <ligand>
        <name>Mn(2+)</name>
        <dbReference type="ChEBI" id="CHEBI:29035"/>
    </ligand>
</feature>
<protein>
    <recommendedName>
        <fullName evidence="1">2-isopropylmalate synthase</fullName>
        <ecNumber evidence="1">2.3.3.13</ecNumber>
    </recommendedName>
    <alternativeName>
        <fullName evidence="1">Alpha-IPM synthase</fullName>
    </alternativeName>
    <alternativeName>
        <fullName evidence="1">Alpha-isopropylmalate synthase</fullName>
    </alternativeName>
</protein>
<reference key="1">
    <citation type="submission" date="2006-12" db="EMBL/GenBank/DDBJ databases">
        <title>Complete sequence of chromosome 1 of Verminephrobacter eiseniae EF01-2.</title>
        <authorList>
            <person name="Copeland A."/>
            <person name="Lucas S."/>
            <person name="Lapidus A."/>
            <person name="Barry K."/>
            <person name="Detter J.C."/>
            <person name="Glavina del Rio T."/>
            <person name="Dalin E."/>
            <person name="Tice H."/>
            <person name="Pitluck S."/>
            <person name="Chertkov O."/>
            <person name="Brettin T."/>
            <person name="Bruce D."/>
            <person name="Han C."/>
            <person name="Tapia R."/>
            <person name="Gilna P."/>
            <person name="Schmutz J."/>
            <person name="Larimer F."/>
            <person name="Land M."/>
            <person name="Hauser L."/>
            <person name="Kyrpides N."/>
            <person name="Kim E."/>
            <person name="Stahl D."/>
            <person name="Richardson P."/>
        </authorList>
    </citation>
    <scope>NUCLEOTIDE SEQUENCE [LARGE SCALE GENOMIC DNA]</scope>
    <source>
        <strain>EF01-2</strain>
    </source>
</reference>
<evidence type="ECO:0000255" key="1">
    <source>
        <dbReference type="HAMAP-Rule" id="MF_01025"/>
    </source>
</evidence>
<organism>
    <name type="scientific">Verminephrobacter eiseniae (strain EF01-2)</name>
    <dbReference type="NCBI Taxonomy" id="391735"/>
    <lineage>
        <taxon>Bacteria</taxon>
        <taxon>Pseudomonadati</taxon>
        <taxon>Pseudomonadota</taxon>
        <taxon>Betaproteobacteria</taxon>
        <taxon>Burkholderiales</taxon>
        <taxon>Comamonadaceae</taxon>
        <taxon>Verminephrobacter</taxon>
    </lineage>
</organism>